<comment type="catalytic activity">
    <reaction>
        <text>a ubiquinone + D-glucose = D-glucono-1,5-lactone + a ubiquinol</text>
        <dbReference type="Rhea" id="RHEA:22152"/>
        <dbReference type="Rhea" id="RHEA-COMP:9565"/>
        <dbReference type="Rhea" id="RHEA-COMP:9566"/>
        <dbReference type="ChEBI" id="CHEBI:4167"/>
        <dbReference type="ChEBI" id="CHEBI:16217"/>
        <dbReference type="ChEBI" id="CHEBI:16389"/>
        <dbReference type="ChEBI" id="CHEBI:17976"/>
        <dbReference type="EC" id="1.1.5.2"/>
    </reaction>
</comment>
<comment type="cofactor">
    <cofactor>
        <name>pyrroloquinoline quinone</name>
        <dbReference type="ChEBI" id="CHEBI:58442"/>
    </cofactor>
</comment>
<comment type="subcellular location">
    <subcellularLocation>
        <location>Cell inner membrane</location>
        <topology>Multi-pass membrane protein</topology>
        <orientation>Periplasmic side</orientation>
    </subcellularLocation>
</comment>
<comment type="miscellaneous">
    <text>The P1 form can oxidize only D-glucose, while the P2 form can also oxidize maltose. The sequence of P1 form is shown here.</text>
</comment>
<comment type="similarity">
    <text evidence="3">Belongs to the bacterial PQQ dehydrogenase family.</text>
</comment>
<reference key="1">
    <citation type="journal article" date="1991" name="Mol. Gen. Genet.">
        <title>A single amino acid substitution changes the substrate specificity of quinoprotein glucose dehydrogenase in Gluconobacter oxydans.</title>
        <authorList>
            <person name="Cleton-Jansen A.-M."/>
            <person name="Dekker S."/>
            <person name="van de Putte P."/>
            <person name="Goosen N."/>
        </authorList>
    </citation>
    <scope>NUCLEOTIDE SEQUENCE [GENOMIC DNA]</scope>
</reference>
<reference key="2">
    <citation type="submission" date="1992-02" db="EMBL/GenBank/DDBJ databases">
        <authorList>
            <person name="Goosen N."/>
        </authorList>
    </citation>
    <scope>SEQUENCE REVISION TO 213</scope>
</reference>
<reference key="3">
    <citation type="journal article" date="2005" name="Nat. Biotechnol.">
        <title>Complete genome sequence of the acetic acid bacterium Gluconobacter oxydans.</title>
        <authorList>
            <person name="Prust C."/>
            <person name="Hoffmeister M."/>
            <person name="Liesegang H."/>
            <person name="Wiezer A."/>
            <person name="Fricke W.F."/>
            <person name="Ehrenreich A."/>
            <person name="Gottschalk G."/>
            <person name="Deppenmeier U."/>
        </authorList>
    </citation>
    <scope>NUCLEOTIDE SEQUENCE [LARGE SCALE GENOMIC DNA]</scope>
    <source>
        <strain>621H</strain>
    </source>
</reference>
<evidence type="ECO:0000255" key="1"/>
<evidence type="ECO:0000256" key="2">
    <source>
        <dbReference type="SAM" id="MobiDB-lite"/>
    </source>
</evidence>
<evidence type="ECO:0000305" key="3"/>
<keyword id="KW-0997">Cell inner membrane</keyword>
<keyword id="KW-1003">Cell membrane</keyword>
<keyword id="KW-0472">Membrane</keyword>
<keyword id="KW-0560">Oxidoreductase</keyword>
<keyword id="KW-0634">PQQ</keyword>
<keyword id="KW-1185">Reference proteome</keyword>
<keyword id="KW-0732">Signal</keyword>
<keyword id="KW-0812">Transmembrane</keyword>
<keyword id="KW-1133">Transmembrane helix</keyword>
<name>DHG_GLUOX</name>
<proteinExistence type="inferred from homology"/>
<protein>
    <recommendedName>
        <fullName>Quinoprotein glucose dehydrogenase</fullName>
        <ecNumber>1.1.5.2</ecNumber>
    </recommendedName>
    <alternativeName>
        <fullName>Glucose dehydrogenase [pyrroloquinoline-quinone]</fullName>
    </alternativeName>
</protein>
<feature type="signal peptide" evidence="1">
    <location>
        <begin position="1"/>
        <end position="33"/>
    </location>
</feature>
<feature type="chain" id="PRO_0000025558" description="Quinoprotein glucose dehydrogenase">
    <location>
        <begin position="34"/>
        <end position="808"/>
    </location>
</feature>
<feature type="transmembrane region" description="Helical" evidence="1">
    <location>
        <begin position="35"/>
        <end position="54"/>
    </location>
</feature>
<feature type="transmembrane region" description="Helical" evidence="1">
    <location>
        <begin position="59"/>
        <end position="76"/>
    </location>
</feature>
<feature type="transmembrane region" description="Helical" evidence="1">
    <location>
        <begin position="94"/>
        <end position="108"/>
    </location>
</feature>
<feature type="transmembrane region" description="Helical" evidence="1">
    <location>
        <begin position="123"/>
        <end position="138"/>
    </location>
</feature>
<feature type="region of interest" description="Disordered" evidence="2">
    <location>
        <begin position="514"/>
        <end position="545"/>
    </location>
</feature>
<feature type="compositionally biased region" description="Polar residues" evidence="2">
    <location>
        <begin position="531"/>
        <end position="541"/>
    </location>
</feature>
<feature type="active site" description="Proton acceptor" evidence="1">
    <location>
        <position position="470"/>
    </location>
</feature>
<feature type="sequence variant" description="In P2 form.">
    <original>H</original>
    <variation>N</variation>
    <location>
        <position position="788"/>
    </location>
</feature>
<feature type="sequence conflict" description="In Ref. 1; CAA44594." evidence="3" ref="1">
    <original>T</original>
    <variation>I</variation>
    <location>
        <position position="4"/>
    </location>
</feature>
<feature type="sequence conflict" description="In Ref. 1; CAA44594." evidence="3" ref="1">
    <original>G</original>
    <variation>R</variation>
    <location>
        <position position="8"/>
    </location>
</feature>
<feature type="sequence conflict" description="In Ref. 1." evidence="3" ref="1">
    <original>QIGGTRTTVLPLAG</original>
    <variation>ARSVARGRPSCRSP</variation>
    <location>
        <begin position="110"/>
        <end position="123"/>
    </location>
</feature>
<feature type="sequence conflict" description="In Ref. 1; CAA44594." evidence="3" ref="1">
    <original>D</original>
    <variation>E</variation>
    <location>
        <position position="146"/>
    </location>
</feature>
<feature type="sequence conflict" description="In Ref. 1; CAA44594." evidence="3" ref="1">
    <original>S</original>
    <variation>T</variation>
    <location>
        <position position="188"/>
    </location>
</feature>
<feature type="sequence conflict" description="In Ref. 1." evidence="3" ref="1">
    <original>A</original>
    <variation>Q</variation>
    <location>
        <position position="213"/>
    </location>
</feature>
<feature type="sequence conflict" description="In Ref. 1; CAA44594." evidence="3" ref="1">
    <original>T</original>
    <variation>M</variation>
    <location>
        <position position="277"/>
    </location>
</feature>
<feature type="sequence conflict" description="In Ref. 1; CAA44594." evidence="3" ref="1">
    <original>RI</original>
    <variation>DS</variation>
    <location>
        <begin position="291"/>
        <end position="292"/>
    </location>
</feature>
<feature type="sequence conflict" description="In Ref. 1; CAA44594." evidence="3" ref="1">
    <original>D</original>
    <variation>E</variation>
    <location>
        <position position="395"/>
    </location>
</feature>
<feature type="sequence conflict" description="In Ref. 1; CAA44594." evidence="3" ref="1">
    <original>R</original>
    <variation>A</variation>
    <location>
        <position position="415"/>
    </location>
</feature>
<feature type="sequence conflict" description="In Ref. 1; CAA44594." evidence="3" ref="1">
    <original>DV</original>
    <variation>EL</variation>
    <location>
        <begin position="472"/>
        <end position="473"/>
    </location>
</feature>
<feature type="sequence conflict" description="In Ref. 1; CAA44594." evidence="3" ref="1">
    <original>KD</original>
    <variation>EN</variation>
    <location>
        <begin position="635"/>
        <end position="636"/>
    </location>
</feature>
<gene>
    <name type="primary">gdh</name>
    <name type="ordered locus">GOX0265</name>
</gene>
<sequence>MSTTSRPGLWALITAAVFALCGAILTVGGAWVAAIGGPLYYVILGLALLATAFLSFRRNPAALYLFAVVVFGTVIWELTVVGLDIWALIPRSDIVIILGIWLLLPFVSRQIGGTRTTVLPLAGAVGVAVLALFASLFTDPHDISGDLPTQIANASPADPDNVPASEWHAYGRTQAGDRWSPLNQINASNVSNLKVAWHIHTKDMMNSNDPGEATNEATPIEFNNTLYMCSLHQKLFAVDGATGNVKWVYDPKLQINPGFQHLTCRGVSFHETPANATDSDGNPAPTDCAKRIILPVNDGRLVEVDADTGKTCSGFGNNGEIDLRVPNQPYTTPGQYEPTSPPVITDKLIIANSAITDNGSVKQASGATQAFDVYTGKRVWVFDASNPDPNQLPDDSHPVFHPNSPNSWIVSSYDRNLNLVYIPMGVGTPDQWGGDRTKDSERFAPGIVALNADTGKLAWFYQTVHHDLWDMDVPSQPSLVDVTQKDGTLVPAIYAPTKTGDIFVLDRRTGKEIVPAPETPVPQGAAPGDHTSPTQPMSQLTLRPKNPLNDSDIWGGTIFDQMFCSIYFHTLRYEGPFTPPSLKGSLIFPGDLGMFEWGGLAVDPQRQVAFANPISLPFVSQLVPRGPGNPLWPEKDAKGTGGETGLQHNYGIPYAVNLHPFLDPVLLPFGIKMPCRTPPWGYVAGIDLKTNKVVWQHRNGTLRDSMYGSSLPIPLPPIKIGVPSLGGPLSTAGNLGFLTASMDYYIRAYNLTTGKVLWQDRLPAGAQATPITYAINGKQYIVTYAGGHNSFPTRMGDDIIAYALPDQK</sequence>
<accession>P27175</accession>
<accession>Q5FU98</accession>
<organism>
    <name type="scientific">Gluconobacter oxydans (strain 621H)</name>
    <name type="common">Gluconobacter suboxydans</name>
    <dbReference type="NCBI Taxonomy" id="290633"/>
    <lineage>
        <taxon>Bacteria</taxon>
        <taxon>Pseudomonadati</taxon>
        <taxon>Pseudomonadota</taxon>
        <taxon>Alphaproteobacteria</taxon>
        <taxon>Acetobacterales</taxon>
        <taxon>Acetobacteraceae</taxon>
        <taxon>Gluconobacter</taxon>
    </lineage>
</organism>
<dbReference type="EC" id="1.1.5.2"/>
<dbReference type="EMBL" id="X62710">
    <property type="protein sequence ID" value="CAA44594.1"/>
    <property type="status" value="ALT_SEQ"/>
    <property type="molecule type" value="Genomic_DNA"/>
</dbReference>
<dbReference type="EMBL" id="CP000009">
    <property type="protein sequence ID" value="AAW60048.1"/>
    <property type="molecule type" value="Genomic_DNA"/>
</dbReference>
<dbReference type="PIR" id="S17716">
    <property type="entry name" value="QPKEX"/>
</dbReference>
<dbReference type="RefSeq" id="WP_011251851.1">
    <property type="nucleotide sequence ID" value="NC_006677.1"/>
</dbReference>
<dbReference type="SMR" id="P27175"/>
<dbReference type="STRING" id="290633.GOX0265"/>
<dbReference type="KEGG" id="gox:GOX0265"/>
<dbReference type="eggNOG" id="COG4993">
    <property type="taxonomic scope" value="Bacteria"/>
</dbReference>
<dbReference type="HOGENOM" id="CLU_018478_1_0_5"/>
<dbReference type="Proteomes" id="UP000006375">
    <property type="component" value="Chromosome"/>
</dbReference>
<dbReference type="GO" id="GO:0030288">
    <property type="term" value="C:outer membrane-bounded periplasmic space"/>
    <property type="evidence" value="ECO:0007669"/>
    <property type="project" value="InterPro"/>
</dbReference>
<dbReference type="GO" id="GO:0005886">
    <property type="term" value="C:plasma membrane"/>
    <property type="evidence" value="ECO:0007669"/>
    <property type="project" value="UniProtKB-SubCell"/>
</dbReference>
<dbReference type="GO" id="GO:0048038">
    <property type="term" value="F:quinone binding"/>
    <property type="evidence" value="ECO:0007669"/>
    <property type="project" value="InterPro"/>
</dbReference>
<dbReference type="GO" id="GO:0008876">
    <property type="term" value="F:quinoprotein glucose dehydrogenase activity"/>
    <property type="evidence" value="ECO:0007669"/>
    <property type="project" value="UniProtKB-EC"/>
</dbReference>
<dbReference type="CDD" id="cd10280">
    <property type="entry name" value="PQQ_mGDH"/>
    <property type="match status" value="1"/>
</dbReference>
<dbReference type="Gene3D" id="2.140.10.10">
    <property type="entry name" value="Quinoprotein alcohol dehydrogenase-like superfamily"/>
    <property type="match status" value="2"/>
</dbReference>
<dbReference type="InterPro" id="IPR018391">
    <property type="entry name" value="PQQ_b-propeller_rpt"/>
</dbReference>
<dbReference type="InterPro" id="IPR017511">
    <property type="entry name" value="PQQ_mDH"/>
</dbReference>
<dbReference type="InterPro" id="IPR002372">
    <property type="entry name" value="PQQ_rpt_dom"/>
</dbReference>
<dbReference type="InterPro" id="IPR011047">
    <property type="entry name" value="Quinoprotein_ADH-like_sf"/>
</dbReference>
<dbReference type="InterPro" id="IPR001479">
    <property type="entry name" value="Quinoprotein_DH_CS"/>
</dbReference>
<dbReference type="NCBIfam" id="TIGR03074">
    <property type="entry name" value="PQQ_membr_DH"/>
    <property type="match status" value="1"/>
</dbReference>
<dbReference type="PANTHER" id="PTHR32303">
    <property type="entry name" value="QUINOPROTEIN ALCOHOL DEHYDROGENASE (CYTOCHROME C)"/>
    <property type="match status" value="1"/>
</dbReference>
<dbReference type="PANTHER" id="PTHR32303:SF4">
    <property type="entry name" value="QUINOPROTEIN GLUCOSE DEHYDROGENASE"/>
    <property type="match status" value="1"/>
</dbReference>
<dbReference type="Pfam" id="PF01011">
    <property type="entry name" value="PQQ"/>
    <property type="match status" value="1"/>
</dbReference>
<dbReference type="SMART" id="SM00564">
    <property type="entry name" value="PQQ"/>
    <property type="match status" value="3"/>
</dbReference>
<dbReference type="SUPFAM" id="SSF50998">
    <property type="entry name" value="Quinoprotein alcohol dehydrogenase-like"/>
    <property type="match status" value="1"/>
</dbReference>
<dbReference type="PROSITE" id="PS00363">
    <property type="entry name" value="BACTERIAL_PQQ_1"/>
    <property type="match status" value="1"/>
</dbReference>
<dbReference type="PROSITE" id="PS00364">
    <property type="entry name" value="BACTERIAL_PQQ_2"/>
    <property type="match status" value="1"/>
</dbReference>